<gene>
    <name evidence="1" type="primary">gltX</name>
    <name type="ordered locus">Haur_0757</name>
</gene>
<accession>A9AXJ1</accession>
<organism>
    <name type="scientific">Herpetosiphon aurantiacus (strain ATCC 23779 / DSM 785 / 114-95)</name>
    <dbReference type="NCBI Taxonomy" id="316274"/>
    <lineage>
        <taxon>Bacteria</taxon>
        <taxon>Bacillati</taxon>
        <taxon>Chloroflexota</taxon>
        <taxon>Chloroflexia</taxon>
        <taxon>Herpetosiphonales</taxon>
        <taxon>Herpetosiphonaceae</taxon>
        <taxon>Herpetosiphon</taxon>
    </lineage>
</organism>
<protein>
    <recommendedName>
        <fullName evidence="1">Glutamate--tRNA ligase</fullName>
        <ecNumber evidence="1">6.1.1.17</ecNumber>
    </recommendedName>
    <alternativeName>
        <fullName evidence="1">Glutamyl-tRNA synthetase</fullName>
        <shortName evidence="1">GluRS</shortName>
    </alternativeName>
</protein>
<keyword id="KW-0030">Aminoacyl-tRNA synthetase</keyword>
<keyword id="KW-0067">ATP-binding</keyword>
<keyword id="KW-0963">Cytoplasm</keyword>
<keyword id="KW-0436">Ligase</keyword>
<keyword id="KW-0547">Nucleotide-binding</keyword>
<keyword id="KW-0648">Protein biosynthesis</keyword>
<comment type="function">
    <text evidence="1">Catalyzes the attachment of glutamate to tRNA(Glu) in a two-step reaction: glutamate is first activated by ATP to form Glu-AMP and then transferred to the acceptor end of tRNA(Glu).</text>
</comment>
<comment type="catalytic activity">
    <reaction evidence="1">
        <text>tRNA(Glu) + L-glutamate + ATP = L-glutamyl-tRNA(Glu) + AMP + diphosphate</text>
        <dbReference type="Rhea" id="RHEA:23540"/>
        <dbReference type="Rhea" id="RHEA-COMP:9663"/>
        <dbReference type="Rhea" id="RHEA-COMP:9680"/>
        <dbReference type="ChEBI" id="CHEBI:29985"/>
        <dbReference type="ChEBI" id="CHEBI:30616"/>
        <dbReference type="ChEBI" id="CHEBI:33019"/>
        <dbReference type="ChEBI" id="CHEBI:78442"/>
        <dbReference type="ChEBI" id="CHEBI:78520"/>
        <dbReference type="ChEBI" id="CHEBI:456215"/>
        <dbReference type="EC" id="6.1.1.17"/>
    </reaction>
</comment>
<comment type="subunit">
    <text evidence="1">Monomer.</text>
</comment>
<comment type="subcellular location">
    <subcellularLocation>
        <location evidence="1">Cytoplasm</location>
    </subcellularLocation>
</comment>
<comment type="similarity">
    <text evidence="1">Belongs to the class-I aminoacyl-tRNA synthetase family. Glutamate--tRNA ligase type 1 subfamily.</text>
</comment>
<name>SYE_HERA2</name>
<evidence type="ECO:0000255" key="1">
    <source>
        <dbReference type="HAMAP-Rule" id="MF_00022"/>
    </source>
</evidence>
<proteinExistence type="inferred from homology"/>
<reference key="1">
    <citation type="journal article" date="2011" name="Stand. Genomic Sci.">
        <title>Complete genome sequence of the filamentous gliding predatory bacterium Herpetosiphon aurantiacus type strain (114-95(T)).</title>
        <authorList>
            <person name="Kiss H."/>
            <person name="Nett M."/>
            <person name="Domin N."/>
            <person name="Martin K."/>
            <person name="Maresca J.A."/>
            <person name="Copeland A."/>
            <person name="Lapidus A."/>
            <person name="Lucas S."/>
            <person name="Berry K.W."/>
            <person name="Glavina Del Rio T."/>
            <person name="Dalin E."/>
            <person name="Tice H."/>
            <person name="Pitluck S."/>
            <person name="Richardson P."/>
            <person name="Bruce D."/>
            <person name="Goodwin L."/>
            <person name="Han C."/>
            <person name="Detter J.C."/>
            <person name="Schmutz J."/>
            <person name="Brettin T."/>
            <person name="Land M."/>
            <person name="Hauser L."/>
            <person name="Kyrpides N.C."/>
            <person name="Ivanova N."/>
            <person name="Goeker M."/>
            <person name="Woyke T."/>
            <person name="Klenk H.P."/>
            <person name="Bryant D.A."/>
        </authorList>
    </citation>
    <scope>NUCLEOTIDE SEQUENCE [LARGE SCALE GENOMIC DNA]</scope>
    <source>
        <strain>ATCC 23779 / DSM 785 / 114-95</strain>
    </source>
</reference>
<dbReference type="EC" id="6.1.1.17" evidence="1"/>
<dbReference type="EMBL" id="CP000875">
    <property type="protein sequence ID" value="ABX03405.1"/>
    <property type="molecule type" value="Genomic_DNA"/>
</dbReference>
<dbReference type="SMR" id="A9AXJ1"/>
<dbReference type="FunCoup" id="A9AXJ1">
    <property type="interactions" value="557"/>
</dbReference>
<dbReference type="STRING" id="316274.Haur_0757"/>
<dbReference type="KEGG" id="hau:Haur_0757"/>
<dbReference type="eggNOG" id="COG0008">
    <property type="taxonomic scope" value="Bacteria"/>
</dbReference>
<dbReference type="HOGENOM" id="CLU_015768_6_3_0"/>
<dbReference type="InParanoid" id="A9AXJ1"/>
<dbReference type="Proteomes" id="UP000000787">
    <property type="component" value="Chromosome"/>
</dbReference>
<dbReference type="GO" id="GO:0005829">
    <property type="term" value="C:cytosol"/>
    <property type="evidence" value="ECO:0007669"/>
    <property type="project" value="TreeGrafter"/>
</dbReference>
<dbReference type="GO" id="GO:0005524">
    <property type="term" value="F:ATP binding"/>
    <property type="evidence" value="ECO:0007669"/>
    <property type="project" value="UniProtKB-UniRule"/>
</dbReference>
<dbReference type="GO" id="GO:0004818">
    <property type="term" value="F:glutamate-tRNA ligase activity"/>
    <property type="evidence" value="ECO:0007669"/>
    <property type="project" value="UniProtKB-UniRule"/>
</dbReference>
<dbReference type="GO" id="GO:0000049">
    <property type="term" value="F:tRNA binding"/>
    <property type="evidence" value="ECO:0007669"/>
    <property type="project" value="InterPro"/>
</dbReference>
<dbReference type="GO" id="GO:0008270">
    <property type="term" value="F:zinc ion binding"/>
    <property type="evidence" value="ECO:0007669"/>
    <property type="project" value="InterPro"/>
</dbReference>
<dbReference type="GO" id="GO:0006424">
    <property type="term" value="P:glutamyl-tRNA aminoacylation"/>
    <property type="evidence" value="ECO:0007669"/>
    <property type="project" value="UniProtKB-UniRule"/>
</dbReference>
<dbReference type="CDD" id="cd00808">
    <property type="entry name" value="GluRS_core"/>
    <property type="match status" value="1"/>
</dbReference>
<dbReference type="Gene3D" id="1.10.10.350">
    <property type="match status" value="1"/>
</dbReference>
<dbReference type="Gene3D" id="1.10.8.70">
    <property type="entry name" value="Glutamate-tRNA synthetase, class I, anticodon-binding domain 1"/>
    <property type="match status" value="1"/>
</dbReference>
<dbReference type="Gene3D" id="3.40.50.620">
    <property type="entry name" value="HUPs"/>
    <property type="match status" value="1"/>
</dbReference>
<dbReference type="HAMAP" id="MF_00022">
    <property type="entry name" value="Glu_tRNA_synth_type1"/>
    <property type="match status" value="1"/>
</dbReference>
<dbReference type="InterPro" id="IPR045462">
    <property type="entry name" value="aa-tRNA-synth_I_cd-bd"/>
</dbReference>
<dbReference type="InterPro" id="IPR020751">
    <property type="entry name" value="aa-tRNA-synth_I_codon-bd_sub2"/>
</dbReference>
<dbReference type="InterPro" id="IPR008925">
    <property type="entry name" value="aa_tRNA-synth_I_cd-bd_sf"/>
</dbReference>
<dbReference type="InterPro" id="IPR004527">
    <property type="entry name" value="Glu-tRNA-ligase_bac/mito"/>
</dbReference>
<dbReference type="InterPro" id="IPR020752">
    <property type="entry name" value="Glu-tRNA-synth_I_codon-bd_sub1"/>
</dbReference>
<dbReference type="InterPro" id="IPR000924">
    <property type="entry name" value="Glu/Gln-tRNA-synth"/>
</dbReference>
<dbReference type="InterPro" id="IPR020058">
    <property type="entry name" value="Glu/Gln-tRNA-synth_Ib_cat-dom"/>
</dbReference>
<dbReference type="InterPro" id="IPR049940">
    <property type="entry name" value="GluQ/Sye"/>
</dbReference>
<dbReference type="InterPro" id="IPR033910">
    <property type="entry name" value="GluRS_core"/>
</dbReference>
<dbReference type="InterPro" id="IPR014729">
    <property type="entry name" value="Rossmann-like_a/b/a_fold"/>
</dbReference>
<dbReference type="NCBIfam" id="TIGR00464">
    <property type="entry name" value="gltX_bact"/>
    <property type="match status" value="1"/>
</dbReference>
<dbReference type="PANTHER" id="PTHR43311">
    <property type="entry name" value="GLUTAMATE--TRNA LIGASE"/>
    <property type="match status" value="1"/>
</dbReference>
<dbReference type="PANTHER" id="PTHR43311:SF2">
    <property type="entry name" value="GLUTAMATE--TRNA LIGASE, MITOCHONDRIAL-RELATED"/>
    <property type="match status" value="1"/>
</dbReference>
<dbReference type="Pfam" id="PF19269">
    <property type="entry name" value="Anticodon_2"/>
    <property type="match status" value="1"/>
</dbReference>
<dbReference type="Pfam" id="PF00749">
    <property type="entry name" value="tRNA-synt_1c"/>
    <property type="match status" value="1"/>
</dbReference>
<dbReference type="PRINTS" id="PR00987">
    <property type="entry name" value="TRNASYNTHGLU"/>
</dbReference>
<dbReference type="SUPFAM" id="SSF48163">
    <property type="entry name" value="An anticodon-binding domain of class I aminoacyl-tRNA synthetases"/>
    <property type="match status" value="1"/>
</dbReference>
<dbReference type="SUPFAM" id="SSF52374">
    <property type="entry name" value="Nucleotidylyl transferase"/>
    <property type="match status" value="1"/>
</dbReference>
<sequence>MSDRPTPARTRFAPSPTGYLHIGSLRTVLFSWLWARHTGGQFLLRIEDTDRKRFVEGAEEQLTSSLQAIGLMWDEGPIVGGPHAPYKQSERLEIYQAHAQALIDKGVAYRSYATADEIAAINAEREARGEPKLLVFRNLPGIDDAAREAAGADYNVRLSLKTTGQTVVQDLVRGQIVFDNAALKMPDPVLLKTDGFPTYALAAMVDDHLMGITHVLRADEWIPTWPIHHQIYEAFGWEQPVWVHVPQVLGSDGKKLSKRHGDTSVTEYIDLGFVPEAIINYLALIGWSYDDKTEFMTLEELIERFDLNRIRPSGGVFDRDKLLHFNGVYLRNMAPAELAQRVAPYLSKAGLISAEPTAAELAKITEYLPLVQDRLKLLSEAPELLDFFFVDPQGYDPALLVPKKGDPAQTVEILGQVKASFEAVETWDAPSLDKLLHDFVNQLGLKIPQVFMPIRVAISGRTTSPGLFETLAVLGKAVTLARISTAAAALSSASV</sequence>
<feature type="chain" id="PRO_1000090080" description="Glutamate--tRNA ligase">
    <location>
        <begin position="1"/>
        <end position="495"/>
    </location>
</feature>
<feature type="short sequence motif" description="'HIGH' region" evidence="1">
    <location>
        <begin position="14"/>
        <end position="24"/>
    </location>
</feature>
<feature type="short sequence motif" description="'KMSKS' region" evidence="1">
    <location>
        <begin position="255"/>
        <end position="259"/>
    </location>
</feature>
<feature type="binding site" evidence="1">
    <location>
        <position position="258"/>
    </location>
    <ligand>
        <name>ATP</name>
        <dbReference type="ChEBI" id="CHEBI:30616"/>
    </ligand>
</feature>